<sequence>MAKASEHFFYVLKCSDNSYYGGYTTDVIRREAEHNAGIRCKYTKTRRPVKVIHFEKFETRSEATKAEAAFKKLSRKNKDAYLIQREESE</sequence>
<comment type="similarity">
    <text evidence="2">Belongs to the UPF0213 family.</text>
</comment>
<protein>
    <recommendedName>
        <fullName>UPF0213 protein LMOf2365_0181</fullName>
    </recommendedName>
</protein>
<accession>Q724P3</accession>
<dbReference type="EMBL" id="AE017262">
    <property type="protein sequence ID" value="AAT02968.1"/>
    <property type="molecule type" value="Genomic_DNA"/>
</dbReference>
<dbReference type="RefSeq" id="WP_003725489.1">
    <property type="nucleotide sequence ID" value="NC_002973.6"/>
</dbReference>
<dbReference type="SMR" id="Q724P3"/>
<dbReference type="KEGG" id="lmf:LMOf2365_0181"/>
<dbReference type="HOGENOM" id="CLU_135650_0_3_9"/>
<dbReference type="CDD" id="cd10456">
    <property type="entry name" value="GIY-YIG_UPF0213"/>
    <property type="match status" value="1"/>
</dbReference>
<dbReference type="Gene3D" id="3.40.1440.10">
    <property type="entry name" value="GIY-YIG endonuclease"/>
    <property type="match status" value="1"/>
</dbReference>
<dbReference type="InterPro" id="IPR000305">
    <property type="entry name" value="GIY-YIG_endonuc"/>
</dbReference>
<dbReference type="InterPro" id="IPR035901">
    <property type="entry name" value="GIY-YIG_endonuc_sf"/>
</dbReference>
<dbReference type="InterPro" id="IPR050190">
    <property type="entry name" value="UPF0213_domain"/>
</dbReference>
<dbReference type="PANTHER" id="PTHR34477">
    <property type="entry name" value="UPF0213 PROTEIN YHBQ"/>
    <property type="match status" value="1"/>
</dbReference>
<dbReference type="PANTHER" id="PTHR34477:SF1">
    <property type="entry name" value="UPF0213 PROTEIN YHBQ"/>
    <property type="match status" value="1"/>
</dbReference>
<dbReference type="Pfam" id="PF01541">
    <property type="entry name" value="GIY-YIG"/>
    <property type="match status" value="1"/>
</dbReference>
<dbReference type="SUPFAM" id="SSF82771">
    <property type="entry name" value="GIY-YIG endonuclease"/>
    <property type="match status" value="1"/>
</dbReference>
<dbReference type="PROSITE" id="PS50164">
    <property type="entry name" value="GIY_YIG"/>
    <property type="match status" value="1"/>
</dbReference>
<proteinExistence type="inferred from homology"/>
<feature type="chain" id="PRO_0000161367" description="UPF0213 protein LMOf2365_0181">
    <location>
        <begin position="1"/>
        <end position="89"/>
    </location>
</feature>
<feature type="domain" description="GIY-YIG" evidence="1">
    <location>
        <begin position="5"/>
        <end position="80"/>
    </location>
</feature>
<organism>
    <name type="scientific">Listeria monocytogenes serotype 4b (strain F2365)</name>
    <dbReference type="NCBI Taxonomy" id="265669"/>
    <lineage>
        <taxon>Bacteria</taxon>
        <taxon>Bacillati</taxon>
        <taxon>Bacillota</taxon>
        <taxon>Bacilli</taxon>
        <taxon>Bacillales</taxon>
        <taxon>Listeriaceae</taxon>
        <taxon>Listeria</taxon>
    </lineage>
</organism>
<gene>
    <name type="ordered locus">LMOf2365_0181</name>
</gene>
<name>Y181_LISMF</name>
<reference key="1">
    <citation type="journal article" date="2004" name="Nucleic Acids Res.">
        <title>Whole genome comparisons of serotype 4b and 1/2a strains of the food-borne pathogen Listeria monocytogenes reveal new insights into the core genome components of this species.</title>
        <authorList>
            <person name="Nelson K.E."/>
            <person name="Fouts D.E."/>
            <person name="Mongodin E.F."/>
            <person name="Ravel J."/>
            <person name="DeBoy R.T."/>
            <person name="Kolonay J.F."/>
            <person name="Rasko D.A."/>
            <person name="Angiuoli S.V."/>
            <person name="Gill S.R."/>
            <person name="Paulsen I.T."/>
            <person name="Peterson J.D."/>
            <person name="White O."/>
            <person name="Nelson W.C."/>
            <person name="Nierman W.C."/>
            <person name="Beanan M.J."/>
            <person name="Brinkac L.M."/>
            <person name="Daugherty S.C."/>
            <person name="Dodson R.J."/>
            <person name="Durkin A.S."/>
            <person name="Madupu R."/>
            <person name="Haft D.H."/>
            <person name="Selengut J."/>
            <person name="Van Aken S.E."/>
            <person name="Khouri H.M."/>
            <person name="Fedorova N."/>
            <person name="Forberger H.A."/>
            <person name="Tran B."/>
            <person name="Kathariou S."/>
            <person name="Wonderling L.D."/>
            <person name="Uhlich G.A."/>
            <person name="Bayles D.O."/>
            <person name="Luchansky J.B."/>
            <person name="Fraser C.M."/>
        </authorList>
    </citation>
    <scope>NUCLEOTIDE SEQUENCE [LARGE SCALE GENOMIC DNA]</scope>
    <source>
        <strain>F2365</strain>
    </source>
</reference>
<evidence type="ECO:0000255" key="1">
    <source>
        <dbReference type="PROSITE-ProRule" id="PRU00977"/>
    </source>
</evidence>
<evidence type="ECO:0000305" key="2"/>